<organism>
    <name type="scientific">Buchnera aphidicola subsp. Acyrthosiphon pisum (strain APS)</name>
    <name type="common">Acyrthosiphon pisum symbiotic bacterium</name>
    <dbReference type="NCBI Taxonomy" id="107806"/>
    <lineage>
        <taxon>Bacteria</taxon>
        <taxon>Pseudomonadati</taxon>
        <taxon>Pseudomonadota</taxon>
        <taxon>Gammaproteobacteria</taxon>
        <taxon>Enterobacterales</taxon>
        <taxon>Erwiniaceae</taxon>
        <taxon>Buchnera</taxon>
    </lineage>
</organism>
<name>CYSE_BUCAI</name>
<proteinExistence type="inferred from homology"/>
<protein>
    <recommendedName>
        <fullName>Serine acetyltransferase</fullName>
        <shortName>SAT</shortName>
        <ecNumber>2.3.1.30</ecNumber>
    </recommendedName>
</protein>
<gene>
    <name type="primary">cysE</name>
    <name type="ordered locus">BU054</name>
</gene>
<feature type="chain" id="PRO_0000068666" description="Serine acetyltransferase">
    <location>
        <begin position="1"/>
        <end position="274"/>
    </location>
</feature>
<evidence type="ECO:0000250" key="1"/>
<evidence type="ECO:0000305" key="2"/>
<dbReference type="EC" id="2.3.1.30"/>
<dbReference type="EMBL" id="BA000003">
    <property type="protein sequence ID" value="BAB12777.1"/>
    <property type="molecule type" value="Genomic_DNA"/>
</dbReference>
<dbReference type="RefSeq" id="NP_239891.1">
    <property type="nucleotide sequence ID" value="NC_002528.1"/>
</dbReference>
<dbReference type="RefSeq" id="WP_009874011.1">
    <property type="nucleotide sequence ID" value="NZ_AP036055.1"/>
</dbReference>
<dbReference type="SMR" id="P57162"/>
<dbReference type="STRING" id="563178.BUAP5A_053"/>
<dbReference type="EnsemblBacteria" id="BAB12777">
    <property type="protein sequence ID" value="BAB12777"/>
    <property type="gene ID" value="BAB12777"/>
</dbReference>
<dbReference type="KEGG" id="buc:BU054"/>
<dbReference type="PATRIC" id="fig|107806.10.peg.63"/>
<dbReference type="eggNOG" id="COG1045">
    <property type="taxonomic scope" value="Bacteria"/>
</dbReference>
<dbReference type="HOGENOM" id="CLU_051638_0_1_6"/>
<dbReference type="UniPathway" id="UPA00136">
    <property type="reaction ID" value="UER00199"/>
</dbReference>
<dbReference type="Proteomes" id="UP000001806">
    <property type="component" value="Chromosome"/>
</dbReference>
<dbReference type="GO" id="GO:0005737">
    <property type="term" value="C:cytoplasm"/>
    <property type="evidence" value="ECO:0007669"/>
    <property type="project" value="UniProtKB-SubCell"/>
</dbReference>
<dbReference type="GO" id="GO:0009001">
    <property type="term" value="F:serine O-acetyltransferase activity"/>
    <property type="evidence" value="ECO:0007669"/>
    <property type="project" value="UniProtKB-EC"/>
</dbReference>
<dbReference type="GO" id="GO:0006535">
    <property type="term" value="P:cysteine biosynthetic process from serine"/>
    <property type="evidence" value="ECO:0007669"/>
    <property type="project" value="InterPro"/>
</dbReference>
<dbReference type="CDD" id="cd03354">
    <property type="entry name" value="LbH_SAT"/>
    <property type="match status" value="1"/>
</dbReference>
<dbReference type="FunFam" id="2.160.10.10:FF:000002">
    <property type="entry name" value="Serine acetyltransferase"/>
    <property type="match status" value="1"/>
</dbReference>
<dbReference type="Gene3D" id="2.160.10.10">
    <property type="entry name" value="Hexapeptide repeat proteins"/>
    <property type="match status" value="1"/>
</dbReference>
<dbReference type="Gene3D" id="1.10.3130.10">
    <property type="entry name" value="serine acetyltransferase, domain 1"/>
    <property type="match status" value="1"/>
</dbReference>
<dbReference type="InterPro" id="IPR001451">
    <property type="entry name" value="Hexapep"/>
</dbReference>
<dbReference type="InterPro" id="IPR018357">
    <property type="entry name" value="Hexapep_transf_CS"/>
</dbReference>
<dbReference type="InterPro" id="IPR045304">
    <property type="entry name" value="LbH_SAT"/>
</dbReference>
<dbReference type="InterPro" id="IPR010493">
    <property type="entry name" value="Ser_AcTrfase_N"/>
</dbReference>
<dbReference type="InterPro" id="IPR042122">
    <property type="entry name" value="Ser_AcTrfase_N_sf"/>
</dbReference>
<dbReference type="InterPro" id="IPR005881">
    <property type="entry name" value="Ser_O-AcTrfase"/>
</dbReference>
<dbReference type="InterPro" id="IPR053376">
    <property type="entry name" value="Serine_acetyltransferase"/>
</dbReference>
<dbReference type="InterPro" id="IPR011004">
    <property type="entry name" value="Trimer_LpxA-like_sf"/>
</dbReference>
<dbReference type="NCBIfam" id="TIGR01172">
    <property type="entry name" value="cysE"/>
    <property type="match status" value="1"/>
</dbReference>
<dbReference type="NCBIfam" id="NF041874">
    <property type="entry name" value="EPS_EpsC"/>
    <property type="match status" value="1"/>
</dbReference>
<dbReference type="PANTHER" id="PTHR42811">
    <property type="entry name" value="SERINE ACETYLTRANSFERASE"/>
    <property type="match status" value="1"/>
</dbReference>
<dbReference type="Pfam" id="PF00132">
    <property type="entry name" value="Hexapep"/>
    <property type="match status" value="1"/>
</dbReference>
<dbReference type="Pfam" id="PF06426">
    <property type="entry name" value="SATase_N"/>
    <property type="match status" value="1"/>
</dbReference>
<dbReference type="SMART" id="SM00971">
    <property type="entry name" value="SATase_N"/>
    <property type="match status" value="1"/>
</dbReference>
<dbReference type="SUPFAM" id="SSF51161">
    <property type="entry name" value="Trimeric LpxA-like enzymes"/>
    <property type="match status" value="1"/>
</dbReference>
<dbReference type="PROSITE" id="PS00101">
    <property type="entry name" value="HEXAPEP_TRANSFERASES"/>
    <property type="match status" value="1"/>
</dbReference>
<sequence>MCILKISRIWNKILYDVSFLLKKEPILSDFYQSSILQHQSFTSSLSYILSNKLSTSMISEKKIQGIFDDVYLNDRSILNFIVQDIKAVLKRDPAVNDYLTPLLYLKGFHALEAYRISHYLWNTGKKSLSLYLQSRISSEFSVDIHPAAFIGSGVMLDHATGIVIGEGVTIENDVSILHSVTLGGTGKNFSQNRHPTIRKGVVIGAGAKILGNIEVGSGAKIGAGSIVLKNVPSDVTVVGVPAKIVSQVSSKKYYSQKKKNSLKYINIFQHGDGI</sequence>
<accession>P57162</accession>
<comment type="catalytic activity">
    <reaction>
        <text>L-serine + acetyl-CoA = O-acetyl-L-serine + CoA</text>
        <dbReference type="Rhea" id="RHEA:24560"/>
        <dbReference type="ChEBI" id="CHEBI:33384"/>
        <dbReference type="ChEBI" id="CHEBI:57287"/>
        <dbReference type="ChEBI" id="CHEBI:57288"/>
        <dbReference type="ChEBI" id="CHEBI:58340"/>
        <dbReference type="EC" id="2.3.1.30"/>
    </reaction>
</comment>
<comment type="pathway">
    <text>Amino-acid biosynthesis; L-cysteine biosynthesis; L-cysteine from L-serine: step 1/2.</text>
</comment>
<comment type="subcellular location">
    <subcellularLocation>
        <location evidence="1">Cytoplasm</location>
    </subcellularLocation>
</comment>
<comment type="similarity">
    <text evidence="2">Belongs to the transferase hexapeptide repeat family.</text>
</comment>
<reference key="1">
    <citation type="journal article" date="2000" name="Nature">
        <title>Genome sequence of the endocellular bacterial symbiont of aphids Buchnera sp. APS.</title>
        <authorList>
            <person name="Shigenobu S."/>
            <person name="Watanabe H."/>
            <person name="Hattori M."/>
            <person name="Sakaki Y."/>
            <person name="Ishikawa H."/>
        </authorList>
    </citation>
    <scope>NUCLEOTIDE SEQUENCE [LARGE SCALE GENOMIC DNA]</scope>
    <source>
        <strain>APS</strain>
    </source>
</reference>
<keyword id="KW-0012">Acyltransferase</keyword>
<keyword id="KW-0028">Amino-acid biosynthesis</keyword>
<keyword id="KW-0198">Cysteine biosynthesis</keyword>
<keyword id="KW-0963">Cytoplasm</keyword>
<keyword id="KW-1185">Reference proteome</keyword>
<keyword id="KW-0677">Repeat</keyword>
<keyword id="KW-0808">Transferase</keyword>